<gene>
    <name evidence="1" type="primary">rplO</name>
    <name type="ordered locus">A1G_05460</name>
</gene>
<proteinExistence type="inferred from homology"/>
<keyword id="KW-0687">Ribonucleoprotein</keyword>
<keyword id="KW-0689">Ribosomal protein</keyword>
<keyword id="KW-0694">RNA-binding</keyword>
<keyword id="KW-0699">rRNA-binding</keyword>
<dbReference type="EMBL" id="CP000848">
    <property type="protein sequence ID" value="ABV76575.1"/>
    <property type="molecule type" value="Genomic_DNA"/>
</dbReference>
<dbReference type="RefSeq" id="WP_012151138.1">
    <property type="nucleotide sequence ID" value="NZ_CP121767.1"/>
</dbReference>
<dbReference type="SMR" id="A8GT50"/>
<dbReference type="GeneID" id="79937651"/>
<dbReference type="KEGG" id="rri:A1G_05460"/>
<dbReference type="HOGENOM" id="CLU_055188_4_0_5"/>
<dbReference type="Proteomes" id="UP000006832">
    <property type="component" value="Chromosome"/>
</dbReference>
<dbReference type="GO" id="GO:0015934">
    <property type="term" value="C:large ribosomal subunit"/>
    <property type="evidence" value="ECO:0007669"/>
    <property type="project" value="InterPro"/>
</dbReference>
<dbReference type="GO" id="GO:0019843">
    <property type="term" value="F:rRNA binding"/>
    <property type="evidence" value="ECO:0007669"/>
    <property type="project" value="UniProtKB-UniRule"/>
</dbReference>
<dbReference type="GO" id="GO:0003735">
    <property type="term" value="F:structural constituent of ribosome"/>
    <property type="evidence" value="ECO:0007669"/>
    <property type="project" value="InterPro"/>
</dbReference>
<dbReference type="GO" id="GO:0006412">
    <property type="term" value="P:translation"/>
    <property type="evidence" value="ECO:0007669"/>
    <property type="project" value="UniProtKB-UniRule"/>
</dbReference>
<dbReference type="Gene3D" id="3.100.10.10">
    <property type="match status" value="1"/>
</dbReference>
<dbReference type="HAMAP" id="MF_01341">
    <property type="entry name" value="Ribosomal_uL15"/>
    <property type="match status" value="1"/>
</dbReference>
<dbReference type="InterPro" id="IPR030878">
    <property type="entry name" value="Ribosomal_uL15"/>
</dbReference>
<dbReference type="InterPro" id="IPR021131">
    <property type="entry name" value="Ribosomal_uL15/eL18"/>
</dbReference>
<dbReference type="InterPro" id="IPR036227">
    <property type="entry name" value="Ribosomal_uL15/eL18_sf"/>
</dbReference>
<dbReference type="InterPro" id="IPR005749">
    <property type="entry name" value="Ribosomal_uL15_bac-type"/>
</dbReference>
<dbReference type="NCBIfam" id="TIGR01071">
    <property type="entry name" value="rplO_bact"/>
    <property type="match status" value="1"/>
</dbReference>
<dbReference type="PANTHER" id="PTHR12934">
    <property type="entry name" value="50S RIBOSOMAL PROTEIN L15"/>
    <property type="match status" value="1"/>
</dbReference>
<dbReference type="PANTHER" id="PTHR12934:SF11">
    <property type="entry name" value="LARGE RIBOSOMAL SUBUNIT PROTEIN UL15M"/>
    <property type="match status" value="1"/>
</dbReference>
<dbReference type="Pfam" id="PF00828">
    <property type="entry name" value="Ribosomal_L27A"/>
    <property type="match status" value="1"/>
</dbReference>
<dbReference type="SUPFAM" id="SSF52080">
    <property type="entry name" value="Ribosomal proteins L15p and L18e"/>
    <property type="match status" value="1"/>
</dbReference>
<accession>A8GT50</accession>
<reference key="1">
    <citation type="submission" date="2007-09" db="EMBL/GenBank/DDBJ databases">
        <title>Complete genome sequence of Rickettsia rickettsii.</title>
        <authorList>
            <person name="Madan A."/>
            <person name="Fahey J."/>
            <person name="Helton E."/>
            <person name="Ketteman M."/>
            <person name="Madan A."/>
            <person name="Rodrigues S."/>
            <person name="Sanchez A."/>
            <person name="Dasch G."/>
            <person name="Eremeeva M."/>
        </authorList>
    </citation>
    <scope>NUCLEOTIDE SEQUENCE [LARGE SCALE GENOMIC DNA]</scope>
    <source>
        <strain>Sheila Smith</strain>
    </source>
</reference>
<feature type="chain" id="PRO_1000054531" description="Large ribosomal subunit protein uL15">
    <location>
        <begin position="1"/>
        <end position="153"/>
    </location>
</feature>
<feature type="region of interest" description="Disordered" evidence="2">
    <location>
        <begin position="21"/>
        <end position="41"/>
    </location>
</feature>
<feature type="compositionally biased region" description="Gly residues" evidence="2">
    <location>
        <begin position="23"/>
        <end position="35"/>
    </location>
</feature>
<protein>
    <recommendedName>
        <fullName evidence="1">Large ribosomal subunit protein uL15</fullName>
    </recommendedName>
    <alternativeName>
        <fullName evidence="3">50S ribosomal protein L15</fullName>
    </alternativeName>
</protein>
<comment type="function">
    <text evidence="1">Binds to the 23S rRNA.</text>
</comment>
<comment type="subunit">
    <text evidence="1">Part of the 50S ribosomal subunit.</text>
</comment>
<comment type="similarity">
    <text evidence="1">Belongs to the universal ribosomal protein uL15 family.</text>
</comment>
<sequence length="153" mass="16634">MKLNELYNNIGAKKNKKRIARGIGSGKGKTGGRGIKGQKSRSGVAIKGFEGGQTPMIKRLPKRGFNCISTKKYNIINIYNIEEALADGRLSADDNITKEKLVEARVVNNKNNKKLVKLLSICSDDFAAPLSLKLDAYSAKAKDLIEKAGGKLL</sequence>
<name>RL15_RICRS</name>
<organism>
    <name type="scientific">Rickettsia rickettsii (strain Sheila Smith)</name>
    <dbReference type="NCBI Taxonomy" id="392021"/>
    <lineage>
        <taxon>Bacteria</taxon>
        <taxon>Pseudomonadati</taxon>
        <taxon>Pseudomonadota</taxon>
        <taxon>Alphaproteobacteria</taxon>
        <taxon>Rickettsiales</taxon>
        <taxon>Rickettsiaceae</taxon>
        <taxon>Rickettsieae</taxon>
        <taxon>Rickettsia</taxon>
        <taxon>spotted fever group</taxon>
    </lineage>
</organism>
<evidence type="ECO:0000255" key="1">
    <source>
        <dbReference type="HAMAP-Rule" id="MF_01341"/>
    </source>
</evidence>
<evidence type="ECO:0000256" key="2">
    <source>
        <dbReference type="SAM" id="MobiDB-lite"/>
    </source>
</evidence>
<evidence type="ECO:0000305" key="3"/>